<keyword id="KW-0687">Ribonucleoprotein</keyword>
<keyword id="KW-0689">Ribosomal protein</keyword>
<keyword id="KW-0694">RNA-binding</keyword>
<keyword id="KW-0699">rRNA-binding</keyword>
<gene>
    <name evidence="1" type="primary">rplR</name>
    <name type="ordered locus">XC_3324</name>
</gene>
<protein>
    <recommendedName>
        <fullName evidence="1">Large ribosomal subunit protein uL18</fullName>
    </recommendedName>
    <alternativeName>
        <fullName evidence="2">50S ribosomal protein L18</fullName>
    </alternativeName>
</protein>
<sequence length="119" mass="12830">MSINKNIARLRRAKSTRAHIRELGVARLSVLRTGQHLYAQVFTADGSKVIAAANTLQADVKDGLKNGKNSDAAVKVGKLIAERAKAAGIEKVAFDRSGYRYHGRIKALADAAREGGLQF</sequence>
<dbReference type="EMBL" id="CP000050">
    <property type="protein sequence ID" value="AAY50368.1"/>
    <property type="molecule type" value="Genomic_DNA"/>
</dbReference>
<dbReference type="RefSeq" id="WP_005993383.1">
    <property type="nucleotide sequence ID" value="NZ_CP155948.1"/>
</dbReference>
<dbReference type="SMR" id="Q4URF5"/>
<dbReference type="GeneID" id="93986271"/>
<dbReference type="KEGG" id="xcb:XC_3324"/>
<dbReference type="HOGENOM" id="CLU_098841_0_1_6"/>
<dbReference type="Proteomes" id="UP000000420">
    <property type="component" value="Chromosome"/>
</dbReference>
<dbReference type="GO" id="GO:0022625">
    <property type="term" value="C:cytosolic large ribosomal subunit"/>
    <property type="evidence" value="ECO:0007669"/>
    <property type="project" value="TreeGrafter"/>
</dbReference>
<dbReference type="GO" id="GO:0008097">
    <property type="term" value="F:5S rRNA binding"/>
    <property type="evidence" value="ECO:0007669"/>
    <property type="project" value="TreeGrafter"/>
</dbReference>
<dbReference type="GO" id="GO:0003735">
    <property type="term" value="F:structural constituent of ribosome"/>
    <property type="evidence" value="ECO:0007669"/>
    <property type="project" value="InterPro"/>
</dbReference>
<dbReference type="GO" id="GO:0006412">
    <property type="term" value="P:translation"/>
    <property type="evidence" value="ECO:0007669"/>
    <property type="project" value="UniProtKB-UniRule"/>
</dbReference>
<dbReference type="CDD" id="cd00432">
    <property type="entry name" value="Ribosomal_L18_L5e"/>
    <property type="match status" value="1"/>
</dbReference>
<dbReference type="FunFam" id="3.30.420.100:FF:000001">
    <property type="entry name" value="50S ribosomal protein L18"/>
    <property type="match status" value="1"/>
</dbReference>
<dbReference type="Gene3D" id="3.30.420.100">
    <property type="match status" value="1"/>
</dbReference>
<dbReference type="HAMAP" id="MF_01337_B">
    <property type="entry name" value="Ribosomal_uL18_B"/>
    <property type="match status" value="1"/>
</dbReference>
<dbReference type="InterPro" id="IPR004389">
    <property type="entry name" value="Ribosomal_uL18_bac-type"/>
</dbReference>
<dbReference type="InterPro" id="IPR005484">
    <property type="entry name" value="Ribosomal_uL18_bac/euk"/>
</dbReference>
<dbReference type="NCBIfam" id="TIGR00060">
    <property type="entry name" value="L18_bact"/>
    <property type="match status" value="1"/>
</dbReference>
<dbReference type="PANTHER" id="PTHR12899">
    <property type="entry name" value="39S RIBOSOMAL PROTEIN L18, MITOCHONDRIAL"/>
    <property type="match status" value="1"/>
</dbReference>
<dbReference type="PANTHER" id="PTHR12899:SF3">
    <property type="entry name" value="LARGE RIBOSOMAL SUBUNIT PROTEIN UL18M"/>
    <property type="match status" value="1"/>
</dbReference>
<dbReference type="Pfam" id="PF00861">
    <property type="entry name" value="Ribosomal_L18p"/>
    <property type="match status" value="1"/>
</dbReference>
<dbReference type="SUPFAM" id="SSF53137">
    <property type="entry name" value="Translational machinery components"/>
    <property type="match status" value="1"/>
</dbReference>
<feature type="chain" id="PRO_0000251392" description="Large ribosomal subunit protein uL18">
    <location>
        <begin position="1"/>
        <end position="119"/>
    </location>
</feature>
<accession>Q4URF5</accession>
<comment type="function">
    <text evidence="1">This is one of the proteins that bind and probably mediate the attachment of the 5S RNA into the large ribosomal subunit, where it forms part of the central protuberance.</text>
</comment>
<comment type="subunit">
    <text evidence="1">Part of the 50S ribosomal subunit; part of the 5S rRNA/L5/L18/L25 subcomplex. Contacts the 5S and 23S rRNAs.</text>
</comment>
<comment type="similarity">
    <text evidence="1">Belongs to the universal ribosomal protein uL18 family.</text>
</comment>
<organism>
    <name type="scientific">Xanthomonas campestris pv. campestris (strain 8004)</name>
    <dbReference type="NCBI Taxonomy" id="314565"/>
    <lineage>
        <taxon>Bacteria</taxon>
        <taxon>Pseudomonadati</taxon>
        <taxon>Pseudomonadota</taxon>
        <taxon>Gammaproteobacteria</taxon>
        <taxon>Lysobacterales</taxon>
        <taxon>Lysobacteraceae</taxon>
        <taxon>Xanthomonas</taxon>
    </lineage>
</organism>
<reference key="1">
    <citation type="journal article" date="2005" name="Genome Res.">
        <title>Comparative and functional genomic analyses of the pathogenicity of phytopathogen Xanthomonas campestris pv. campestris.</title>
        <authorList>
            <person name="Qian W."/>
            <person name="Jia Y."/>
            <person name="Ren S.-X."/>
            <person name="He Y.-Q."/>
            <person name="Feng J.-X."/>
            <person name="Lu L.-F."/>
            <person name="Sun Q."/>
            <person name="Ying G."/>
            <person name="Tang D.-J."/>
            <person name="Tang H."/>
            <person name="Wu W."/>
            <person name="Hao P."/>
            <person name="Wang L."/>
            <person name="Jiang B.-L."/>
            <person name="Zeng S."/>
            <person name="Gu W.-Y."/>
            <person name="Lu G."/>
            <person name="Rong L."/>
            <person name="Tian Y."/>
            <person name="Yao Z."/>
            <person name="Fu G."/>
            <person name="Chen B."/>
            <person name="Fang R."/>
            <person name="Qiang B."/>
            <person name="Chen Z."/>
            <person name="Zhao G.-P."/>
            <person name="Tang J.-L."/>
            <person name="He C."/>
        </authorList>
    </citation>
    <scope>NUCLEOTIDE SEQUENCE [LARGE SCALE GENOMIC DNA]</scope>
    <source>
        <strain>8004</strain>
    </source>
</reference>
<name>RL18_XANC8</name>
<evidence type="ECO:0000255" key="1">
    <source>
        <dbReference type="HAMAP-Rule" id="MF_01337"/>
    </source>
</evidence>
<evidence type="ECO:0000305" key="2"/>
<proteinExistence type="inferred from homology"/>